<proteinExistence type="inferred from homology"/>
<name>RK14_DRIGR</name>
<dbReference type="EMBL" id="DQ887676">
    <property type="protein sequence ID" value="ABH88333.1"/>
    <property type="molecule type" value="Genomic_DNA"/>
</dbReference>
<dbReference type="RefSeq" id="YP_784423.1">
    <property type="nucleotide sequence ID" value="NC_008456.1"/>
</dbReference>
<dbReference type="SMR" id="Q06GW0"/>
<dbReference type="GeneID" id="4363609"/>
<dbReference type="GO" id="GO:0009507">
    <property type="term" value="C:chloroplast"/>
    <property type="evidence" value="ECO:0007669"/>
    <property type="project" value="UniProtKB-SubCell"/>
</dbReference>
<dbReference type="GO" id="GO:0022625">
    <property type="term" value="C:cytosolic large ribosomal subunit"/>
    <property type="evidence" value="ECO:0007669"/>
    <property type="project" value="TreeGrafter"/>
</dbReference>
<dbReference type="GO" id="GO:0070180">
    <property type="term" value="F:large ribosomal subunit rRNA binding"/>
    <property type="evidence" value="ECO:0007669"/>
    <property type="project" value="TreeGrafter"/>
</dbReference>
<dbReference type="GO" id="GO:0003735">
    <property type="term" value="F:structural constituent of ribosome"/>
    <property type="evidence" value="ECO:0007669"/>
    <property type="project" value="InterPro"/>
</dbReference>
<dbReference type="GO" id="GO:0006412">
    <property type="term" value="P:translation"/>
    <property type="evidence" value="ECO:0007669"/>
    <property type="project" value="UniProtKB-UniRule"/>
</dbReference>
<dbReference type="CDD" id="cd00337">
    <property type="entry name" value="Ribosomal_uL14"/>
    <property type="match status" value="1"/>
</dbReference>
<dbReference type="FunFam" id="2.40.150.20:FF:000002">
    <property type="entry name" value="50S ribosomal protein L14, chloroplastic"/>
    <property type="match status" value="1"/>
</dbReference>
<dbReference type="Gene3D" id="2.40.150.20">
    <property type="entry name" value="Ribosomal protein L14"/>
    <property type="match status" value="1"/>
</dbReference>
<dbReference type="HAMAP" id="MF_01367">
    <property type="entry name" value="Ribosomal_uL14"/>
    <property type="match status" value="1"/>
</dbReference>
<dbReference type="InterPro" id="IPR000218">
    <property type="entry name" value="Ribosomal_uL14"/>
</dbReference>
<dbReference type="InterPro" id="IPR005745">
    <property type="entry name" value="Ribosomal_uL14_bac-type"/>
</dbReference>
<dbReference type="InterPro" id="IPR019972">
    <property type="entry name" value="Ribosomal_uL14_CS"/>
</dbReference>
<dbReference type="InterPro" id="IPR036853">
    <property type="entry name" value="Ribosomal_uL14_sf"/>
</dbReference>
<dbReference type="NCBIfam" id="TIGR01067">
    <property type="entry name" value="rplN_bact"/>
    <property type="match status" value="1"/>
</dbReference>
<dbReference type="PANTHER" id="PTHR11761">
    <property type="entry name" value="50S/60S RIBOSOMAL PROTEIN L14/L23"/>
    <property type="match status" value="1"/>
</dbReference>
<dbReference type="PANTHER" id="PTHR11761:SF3">
    <property type="entry name" value="LARGE RIBOSOMAL SUBUNIT PROTEIN UL14M"/>
    <property type="match status" value="1"/>
</dbReference>
<dbReference type="Pfam" id="PF00238">
    <property type="entry name" value="Ribosomal_L14"/>
    <property type="match status" value="1"/>
</dbReference>
<dbReference type="SMART" id="SM01374">
    <property type="entry name" value="Ribosomal_L14"/>
    <property type="match status" value="1"/>
</dbReference>
<dbReference type="SUPFAM" id="SSF50193">
    <property type="entry name" value="Ribosomal protein L14"/>
    <property type="match status" value="1"/>
</dbReference>
<dbReference type="PROSITE" id="PS00049">
    <property type="entry name" value="RIBOSOMAL_L14"/>
    <property type="match status" value="1"/>
</dbReference>
<accession>Q06GW0</accession>
<reference key="1">
    <citation type="journal article" date="2006" name="BMC Evol. Biol.">
        <title>Complete plastid genome sequences of Drimys, Liriodendron, and Piper: implications for the phylogenetic relationships of magnoliids.</title>
        <authorList>
            <person name="Cai Z."/>
            <person name="Penaflor C."/>
            <person name="Kuehl J.V."/>
            <person name="Leebens-Mack J."/>
            <person name="Carlson J.E."/>
            <person name="dePamphilis C.W."/>
            <person name="Boore J.L."/>
            <person name="Jansen R.K."/>
        </authorList>
    </citation>
    <scope>NUCLEOTIDE SEQUENCE [LARGE SCALE GENOMIC DNA]</scope>
</reference>
<organism>
    <name type="scientific">Drimys granadensis</name>
    <dbReference type="NCBI Taxonomy" id="224735"/>
    <lineage>
        <taxon>Eukaryota</taxon>
        <taxon>Viridiplantae</taxon>
        <taxon>Streptophyta</taxon>
        <taxon>Embryophyta</taxon>
        <taxon>Tracheophyta</taxon>
        <taxon>Spermatophyta</taxon>
        <taxon>Magnoliopsida</taxon>
        <taxon>Magnoliidae</taxon>
        <taxon>Canellales</taxon>
        <taxon>Winteraceae</taxon>
        <taxon>Drimys</taxon>
    </lineage>
</organism>
<comment type="function">
    <text evidence="1">Binds to 23S rRNA.</text>
</comment>
<comment type="subunit">
    <text evidence="1">Part of the 50S ribosomal subunit.</text>
</comment>
<comment type="subcellular location">
    <subcellularLocation>
        <location>Plastid</location>
        <location>Chloroplast</location>
    </subcellularLocation>
</comment>
<comment type="similarity">
    <text evidence="1">Belongs to the universal ribosomal protein uL14 family.</text>
</comment>
<feature type="chain" id="PRO_0000276343" description="Large ribosomal subunit protein uL14c">
    <location>
        <begin position="1"/>
        <end position="122"/>
    </location>
</feature>
<evidence type="ECO:0000255" key="1">
    <source>
        <dbReference type="HAMAP-Rule" id="MF_01367"/>
    </source>
</evidence>
<evidence type="ECO:0000305" key="2"/>
<gene>
    <name evidence="1" type="primary">rpl14</name>
</gene>
<geneLocation type="chloroplast"/>
<protein>
    <recommendedName>
        <fullName evidence="1">Large ribosomal subunit protein uL14c</fullName>
    </recommendedName>
    <alternativeName>
        <fullName evidence="2">50S ribosomal protein L14, chloroplastic</fullName>
    </alternativeName>
</protein>
<sequence length="122" mass="13576">MIQPQTHLNVADNSGARELMCIRIIGASNRRYAHIGDVIVAVIKEAVPNMPLQRSEVIRAVIVRTCKELKRDNGMIIRYDDNAAVVIDQEGNPKGTRVFGAIARELRQLNFTKIVSLAPEVL</sequence>
<keyword id="KW-0150">Chloroplast</keyword>
<keyword id="KW-0934">Plastid</keyword>
<keyword id="KW-0687">Ribonucleoprotein</keyword>
<keyword id="KW-0689">Ribosomal protein</keyword>
<keyword id="KW-0694">RNA-binding</keyword>
<keyword id="KW-0699">rRNA-binding</keyword>